<protein>
    <recommendedName>
        <fullName>Iroquois-class homeodomain protein IRX-5</fullName>
    </recommendedName>
    <alternativeName>
        <fullName>Homeodomain protein IRX-2A</fullName>
    </alternativeName>
    <alternativeName>
        <fullName>Homeodomain protein IRXB2</fullName>
    </alternativeName>
    <alternativeName>
        <fullName>Iroquois homeobox protein 5</fullName>
    </alternativeName>
</protein>
<reference key="1">
    <citation type="submission" date="2003-07" db="EMBL/GenBank/DDBJ databases">
        <title>Characterization of the human homeobox two-cluster Iroquois gene family.</title>
        <authorList>
            <person name="Hansen L."/>
            <person name="Wu Q."/>
            <person name="Tommerup N."/>
        </authorList>
    </citation>
    <scope>NUCLEOTIDE SEQUENCE [GENOMIC DNA / MRNA] (ISOFORM 2)</scope>
</reference>
<reference key="2">
    <citation type="journal article" date="1999" name="Cell Tissue Res.">
        <title>Regulated expression patterns of IRX-2, an Iroquois-class homeobox gene, in the human breast.</title>
        <authorList>
            <person name="Lewis M.T."/>
            <person name="Ross S."/>
            <person name="Strickland P.A."/>
            <person name="Snyder C.J."/>
            <person name="Daniel C.W."/>
        </authorList>
    </citation>
    <scope>NUCLEOTIDE SEQUENCE [MRNA] (ISOFORM 3)</scope>
    <scope>NUCLEOTIDE SEQUENCE [MRNA] OF 84-256 (ISOFORM 1/3)</scope>
</reference>
<reference key="3">
    <citation type="journal article" date="2008" name="Clin. Cancer Res.">
        <title>The iroquois homeobox gene 5 is regulated by 1,25-dihydroxyvitamin D3 in human prostate cancer and regulates apoptosis and the cell cycle in LNCaP prostate cancer cells.</title>
        <authorList>
            <person name="Myrthue A."/>
            <person name="Rademacher B.L.S."/>
            <person name="Pittsenbarger J."/>
            <person name="Kutyba-Brooks B."/>
            <person name="Gantner M."/>
            <person name="Qian D.Z."/>
            <person name="Beer T.M."/>
        </authorList>
    </citation>
    <scope>DOWN-REGULATION BY 1,25-DIHYDROXYVITAMIN D3</scope>
    <scope>POSSIBLE FUNCTION</scope>
</reference>
<reference key="4">
    <citation type="journal article" date="2004" name="Nature">
        <title>The sequence and analysis of duplication-rich human chromosome 16.</title>
        <authorList>
            <person name="Martin J."/>
            <person name="Han C."/>
            <person name="Gordon L.A."/>
            <person name="Terry A."/>
            <person name="Prabhakar S."/>
            <person name="She X."/>
            <person name="Xie G."/>
            <person name="Hellsten U."/>
            <person name="Chan Y.M."/>
            <person name="Altherr M."/>
            <person name="Couronne O."/>
            <person name="Aerts A."/>
            <person name="Bajorek E."/>
            <person name="Black S."/>
            <person name="Blumer H."/>
            <person name="Branscomb E."/>
            <person name="Brown N.C."/>
            <person name="Bruno W.J."/>
            <person name="Buckingham J.M."/>
            <person name="Callen D.F."/>
            <person name="Campbell C.S."/>
            <person name="Campbell M.L."/>
            <person name="Campbell E.W."/>
            <person name="Caoile C."/>
            <person name="Challacombe J.F."/>
            <person name="Chasteen L.A."/>
            <person name="Chertkov O."/>
            <person name="Chi H.C."/>
            <person name="Christensen M."/>
            <person name="Clark L.M."/>
            <person name="Cohn J.D."/>
            <person name="Denys M."/>
            <person name="Detter J.C."/>
            <person name="Dickson M."/>
            <person name="Dimitrijevic-Bussod M."/>
            <person name="Escobar J."/>
            <person name="Fawcett J.J."/>
            <person name="Flowers D."/>
            <person name="Fotopulos D."/>
            <person name="Glavina T."/>
            <person name="Gomez M."/>
            <person name="Gonzales E."/>
            <person name="Goodstein D."/>
            <person name="Goodwin L.A."/>
            <person name="Grady D.L."/>
            <person name="Grigoriev I."/>
            <person name="Groza M."/>
            <person name="Hammon N."/>
            <person name="Hawkins T."/>
            <person name="Haydu L."/>
            <person name="Hildebrand C.E."/>
            <person name="Huang W."/>
            <person name="Israni S."/>
            <person name="Jett J."/>
            <person name="Jewett P.B."/>
            <person name="Kadner K."/>
            <person name="Kimball H."/>
            <person name="Kobayashi A."/>
            <person name="Krawczyk M.-C."/>
            <person name="Leyba T."/>
            <person name="Longmire J.L."/>
            <person name="Lopez F."/>
            <person name="Lou Y."/>
            <person name="Lowry S."/>
            <person name="Ludeman T."/>
            <person name="Manohar C.F."/>
            <person name="Mark G.A."/>
            <person name="McMurray K.L."/>
            <person name="Meincke L.J."/>
            <person name="Morgan J."/>
            <person name="Moyzis R.K."/>
            <person name="Mundt M.O."/>
            <person name="Munk A.C."/>
            <person name="Nandkeshwar R.D."/>
            <person name="Pitluck S."/>
            <person name="Pollard M."/>
            <person name="Predki P."/>
            <person name="Parson-Quintana B."/>
            <person name="Ramirez L."/>
            <person name="Rash S."/>
            <person name="Retterer J."/>
            <person name="Ricke D.O."/>
            <person name="Robinson D.L."/>
            <person name="Rodriguez A."/>
            <person name="Salamov A."/>
            <person name="Saunders E.H."/>
            <person name="Scott D."/>
            <person name="Shough T."/>
            <person name="Stallings R.L."/>
            <person name="Stalvey M."/>
            <person name="Sutherland R.D."/>
            <person name="Tapia R."/>
            <person name="Tesmer J.G."/>
            <person name="Thayer N."/>
            <person name="Thompson L.S."/>
            <person name="Tice H."/>
            <person name="Torney D.C."/>
            <person name="Tran-Gyamfi M."/>
            <person name="Tsai M."/>
            <person name="Ulanovsky L.E."/>
            <person name="Ustaszewska A."/>
            <person name="Vo N."/>
            <person name="White P.S."/>
            <person name="Williams A.L."/>
            <person name="Wills P.L."/>
            <person name="Wu J.-R."/>
            <person name="Wu K."/>
            <person name="Yang J."/>
            <person name="DeJong P."/>
            <person name="Bruce D."/>
            <person name="Doggett N.A."/>
            <person name="Deaven L."/>
            <person name="Schmutz J."/>
            <person name="Grimwood J."/>
            <person name="Richardson P."/>
            <person name="Rokhsar D.S."/>
            <person name="Eichler E.E."/>
            <person name="Gilna P."/>
            <person name="Lucas S.M."/>
            <person name="Myers R.M."/>
            <person name="Rubin E.M."/>
            <person name="Pennacchio L.A."/>
        </authorList>
    </citation>
    <scope>NUCLEOTIDE SEQUENCE [LARGE SCALE GENOMIC DNA]</scope>
</reference>
<reference key="5">
    <citation type="journal article" date="2012" name="Nat. Genet.">
        <title>Mutations in IRX5 impair craniofacial development and germ cell migration via SDF1.</title>
        <authorList>
            <person name="Bonnard C."/>
            <person name="Strobl A.C."/>
            <person name="Shboul M."/>
            <person name="Lee H."/>
            <person name="Merriman B."/>
            <person name="Nelson S.F."/>
            <person name="Ababneh O.H."/>
            <person name="Uz E."/>
            <person name="Guran T."/>
            <person name="Kayserili H."/>
            <person name="Hamamy H."/>
            <person name="Reversade B."/>
        </authorList>
    </citation>
    <scope>FUNCTION</scope>
    <scope>VARIANTS HMMS PRO-150 AND LYS-166</scope>
    <scope>CHARACTERIZATION OF VARIANTS HMMS PRO-150 AND LYS-166</scope>
</reference>
<reference key="6">
    <citation type="journal article" date="2013" name="J. Proteome Res.">
        <title>Toward a comprehensive characterization of a human cancer cell phosphoproteome.</title>
        <authorList>
            <person name="Zhou H."/>
            <person name="Di Palma S."/>
            <person name="Preisinger C."/>
            <person name="Peng M."/>
            <person name="Polat A.N."/>
            <person name="Heck A.J."/>
            <person name="Mohammed S."/>
        </authorList>
    </citation>
    <scope>PHOSPHORYLATION [LARGE SCALE ANALYSIS] AT SER-274 AND SER-464</scope>
    <scope>IDENTIFICATION BY MASS SPECTROMETRY [LARGE SCALE ANALYSIS]</scope>
    <source>
        <tissue>Cervix carcinoma</tissue>
        <tissue>Erythroleukemia</tissue>
    </source>
</reference>
<keyword id="KW-0025">Alternative splicing</keyword>
<keyword id="KW-0225">Disease variant</keyword>
<keyword id="KW-0238">DNA-binding</keyword>
<keyword id="KW-0371">Homeobox</keyword>
<keyword id="KW-0991">Intellectual disability</keyword>
<keyword id="KW-0539">Nucleus</keyword>
<keyword id="KW-0597">Phosphoprotein</keyword>
<keyword id="KW-1267">Proteomics identification</keyword>
<keyword id="KW-1185">Reference proteome</keyword>
<keyword id="KW-0716">Sensory transduction</keyword>
<keyword id="KW-0804">Transcription</keyword>
<keyword id="KW-0844">Vision</keyword>
<keyword id="KW-0848">Vitamin D</keyword>
<dbReference type="EMBL" id="AY335944">
    <property type="protein sequence ID" value="AAQ16550.1"/>
    <property type="molecule type" value="Genomic_DNA"/>
</dbReference>
<dbReference type="EMBL" id="AY335945">
    <property type="protein sequence ID" value="AAQ16551.1"/>
    <property type="molecule type" value="mRNA"/>
</dbReference>
<dbReference type="EMBL" id="U90304">
    <property type="protein sequence ID" value="AAB50002.1"/>
    <property type="molecule type" value="mRNA"/>
</dbReference>
<dbReference type="EMBL" id="U90309">
    <property type="protein sequence ID" value="AAB50007.1"/>
    <property type="molecule type" value="mRNA"/>
</dbReference>
<dbReference type="EMBL" id="AC106738">
    <property type="status" value="NOT_ANNOTATED_CDS"/>
    <property type="molecule type" value="Genomic_DNA"/>
</dbReference>
<dbReference type="CCDS" id="CCDS10751.1">
    <molecule id="P78411-1"/>
</dbReference>
<dbReference type="CCDS" id="CCDS58462.1">
    <molecule id="P78411-2"/>
</dbReference>
<dbReference type="RefSeq" id="NP_001239126.1">
    <molecule id="P78411-2"/>
    <property type="nucleotide sequence ID" value="NM_001252197.1"/>
</dbReference>
<dbReference type="RefSeq" id="NP_005844.4">
    <molecule id="P78411-1"/>
    <property type="nucleotide sequence ID" value="NM_005853.5"/>
</dbReference>
<dbReference type="SMR" id="P78411"/>
<dbReference type="BioGRID" id="115556">
    <property type="interactions" value="5"/>
</dbReference>
<dbReference type="FunCoup" id="P78411">
    <property type="interactions" value="1225"/>
</dbReference>
<dbReference type="IntAct" id="P78411">
    <property type="interactions" value="2"/>
</dbReference>
<dbReference type="STRING" id="9606.ENSP00000378132"/>
<dbReference type="GlyGen" id="P78411">
    <property type="glycosylation" value="2 sites"/>
</dbReference>
<dbReference type="iPTMnet" id="P78411"/>
<dbReference type="PhosphoSitePlus" id="P78411"/>
<dbReference type="BioMuta" id="IRX5"/>
<dbReference type="DMDM" id="143811406"/>
<dbReference type="jPOST" id="P78411"/>
<dbReference type="MassIVE" id="P78411"/>
<dbReference type="PaxDb" id="9606-ENSP00000378132"/>
<dbReference type="PeptideAtlas" id="P78411"/>
<dbReference type="ProteomicsDB" id="40345"/>
<dbReference type="ProteomicsDB" id="57616">
    <molecule id="P78411-1"/>
</dbReference>
<dbReference type="Antibodypedia" id="14623">
    <property type="antibodies" value="225 antibodies from 23 providers"/>
</dbReference>
<dbReference type="DNASU" id="10265"/>
<dbReference type="Ensembl" id="ENST00000320990.9">
    <molecule id="P78411-2"/>
    <property type="protein sequence ID" value="ENSP00000316250.5"/>
    <property type="gene ID" value="ENSG00000176842.16"/>
</dbReference>
<dbReference type="Ensembl" id="ENST00000394636.9">
    <molecule id="P78411-1"/>
    <property type="protein sequence ID" value="ENSP00000378132.4"/>
    <property type="gene ID" value="ENSG00000176842.16"/>
</dbReference>
<dbReference type="GeneID" id="10265"/>
<dbReference type="KEGG" id="hsa:10265"/>
<dbReference type="MANE-Select" id="ENST00000394636.9">
    <property type="protein sequence ID" value="ENSP00000378132.4"/>
    <property type="RefSeq nucleotide sequence ID" value="NM_005853.6"/>
    <property type="RefSeq protein sequence ID" value="NP_005844.4"/>
</dbReference>
<dbReference type="UCSC" id="uc002ehv.4">
    <molecule id="P78411-1"/>
    <property type="organism name" value="human"/>
</dbReference>
<dbReference type="AGR" id="HGNC:14361"/>
<dbReference type="CTD" id="10265"/>
<dbReference type="DisGeNET" id="10265"/>
<dbReference type="GeneCards" id="IRX5"/>
<dbReference type="HGNC" id="HGNC:14361">
    <property type="gene designation" value="IRX5"/>
</dbReference>
<dbReference type="HPA" id="ENSG00000176842">
    <property type="expression patterns" value="Tissue enhanced (breast, skin)"/>
</dbReference>
<dbReference type="MalaCards" id="IRX5"/>
<dbReference type="MIM" id="606195">
    <property type="type" value="gene"/>
</dbReference>
<dbReference type="MIM" id="611174">
    <property type="type" value="phenotype"/>
</dbReference>
<dbReference type="neXtProt" id="NX_P78411"/>
<dbReference type="OpenTargets" id="ENSG00000176842"/>
<dbReference type="Orphanet" id="314555">
    <property type="disease" value="Facial dysmorphism-ocular anomalies-osteopenia-intellectual disability-dental anomalies syndrome"/>
</dbReference>
<dbReference type="PharmGKB" id="PA29928"/>
<dbReference type="VEuPathDB" id="HostDB:ENSG00000176842"/>
<dbReference type="eggNOG" id="KOG0773">
    <property type="taxonomic scope" value="Eukaryota"/>
</dbReference>
<dbReference type="GeneTree" id="ENSGT00940000159483"/>
<dbReference type="HOGENOM" id="CLU_048118_0_0_1"/>
<dbReference type="InParanoid" id="P78411"/>
<dbReference type="OMA" id="CPFPNSA"/>
<dbReference type="OrthoDB" id="5399138at2759"/>
<dbReference type="PAN-GO" id="P78411">
    <property type="GO annotations" value="6 GO annotations based on evolutionary models"/>
</dbReference>
<dbReference type="PhylomeDB" id="P78411"/>
<dbReference type="TreeFam" id="TF319371"/>
<dbReference type="PathwayCommons" id="P78411"/>
<dbReference type="SignaLink" id="P78411"/>
<dbReference type="SIGNOR" id="P78411"/>
<dbReference type="BioGRID-ORCS" id="10265">
    <property type="hits" value="20 hits in 1175 CRISPR screens"/>
</dbReference>
<dbReference type="ChiTaRS" id="IRX5">
    <property type="organism name" value="human"/>
</dbReference>
<dbReference type="GeneWiki" id="IRX5"/>
<dbReference type="GenomeRNAi" id="10265"/>
<dbReference type="Pharos" id="P78411">
    <property type="development level" value="Tbio"/>
</dbReference>
<dbReference type="PRO" id="PR:P78411"/>
<dbReference type="Proteomes" id="UP000005640">
    <property type="component" value="Chromosome 16"/>
</dbReference>
<dbReference type="RNAct" id="P78411">
    <property type="molecule type" value="protein"/>
</dbReference>
<dbReference type="Bgee" id="ENSG00000176842">
    <property type="expression patterns" value="Expressed in upper leg skin and 108 other cell types or tissues"/>
</dbReference>
<dbReference type="ExpressionAtlas" id="P78411">
    <property type="expression patterns" value="baseline and differential"/>
</dbReference>
<dbReference type="GO" id="GO:0000785">
    <property type="term" value="C:chromatin"/>
    <property type="evidence" value="ECO:0000247"/>
    <property type="project" value="NTNU_SB"/>
</dbReference>
<dbReference type="GO" id="GO:0005634">
    <property type="term" value="C:nucleus"/>
    <property type="evidence" value="ECO:0000318"/>
    <property type="project" value="GO_Central"/>
</dbReference>
<dbReference type="GO" id="GO:0000981">
    <property type="term" value="F:DNA-binding transcription factor activity, RNA polymerase II-specific"/>
    <property type="evidence" value="ECO:0000247"/>
    <property type="project" value="NTNU_SB"/>
</dbReference>
<dbReference type="GO" id="GO:0140297">
    <property type="term" value="F:DNA-binding transcription factor binding"/>
    <property type="evidence" value="ECO:0007669"/>
    <property type="project" value="Ensembl"/>
</dbReference>
<dbReference type="GO" id="GO:0042802">
    <property type="term" value="F:identical protein binding"/>
    <property type="evidence" value="ECO:0007669"/>
    <property type="project" value="Ensembl"/>
</dbReference>
<dbReference type="GO" id="GO:0000978">
    <property type="term" value="F:RNA polymerase II cis-regulatory region sequence-specific DNA binding"/>
    <property type="evidence" value="ECO:0000318"/>
    <property type="project" value="GO_Central"/>
</dbReference>
<dbReference type="GO" id="GO:1990837">
    <property type="term" value="F:sequence-specific double-stranded DNA binding"/>
    <property type="evidence" value="ECO:0000314"/>
    <property type="project" value="ARUK-UCL"/>
</dbReference>
<dbReference type="GO" id="GO:0005499">
    <property type="term" value="F:vitamin D binding"/>
    <property type="evidence" value="ECO:0007669"/>
    <property type="project" value="UniProtKB-KW"/>
</dbReference>
<dbReference type="GO" id="GO:0048468">
    <property type="term" value="P:cell development"/>
    <property type="evidence" value="ECO:0000318"/>
    <property type="project" value="GO_Central"/>
</dbReference>
<dbReference type="GO" id="GO:0048701">
    <property type="term" value="P:embryonic cranial skeleton morphogenesis"/>
    <property type="evidence" value="ECO:0000315"/>
    <property type="project" value="UniProtKB"/>
</dbReference>
<dbReference type="GO" id="GO:0008406">
    <property type="term" value="P:gonad development"/>
    <property type="evidence" value="ECO:0000315"/>
    <property type="project" value="UniProtKB"/>
</dbReference>
<dbReference type="GO" id="GO:0030182">
    <property type="term" value="P:neuron differentiation"/>
    <property type="evidence" value="ECO:0000318"/>
    <property type="project" value="GO_Central"/>
</dbReference>
<dbReference type="GO" id="GO:0042551">
    <property type="term" value="P:neuron maturation"/>
    <property type="evidence" value="ECO:0007669"/>
    <property type="project" value="Ensembl"/>
</dbReference>
<dbReference type="GO" id="GO:0002027">
    <property type="term" value="P:regulation of heart rate"/>
    <property type="evidence" value="ECO:0007669"/>
    <property type="project" value="Ensembl"/>
</dbReference>
<dbReference type="GO" id="GO:0006357">
    <property type="term" value="P:regulation of transcription by RNA polymerase II"/>
    <property type="evidence" value="ECO:0000318"/>
    <property type="project" value="GO_Central"/>
</dbReference>
<dbReference type="GO" id="GO:0060040">
    <property type="term" value="P:retinal bipolar neuron differentiation"/>
    <property type="evidence" value="ECO:0007669"/>
    <property type="project" value="Ensembl"/>
</dbReference>
<dbReference type="GO" id="GO:0007601">
    <property type="term" value="P:visual perception"/>
    <property type="evidence" value="ECO:0007669"/>
    <property type="project" value="UniProtKB-KW"/>
</dbReference>
<dbReference type="CDD" id="cd00086">
    <property type="entry name" value="homeodomain"/>
    <property type="match status" value="1"/>
</dbReference>
<dbReference type="FunFam" id="1.10.10.60:FF:000003">
    <property type="entry name" value="Iroquois-class homeobox protein IRX"/>
    <property type="match status" value="1"/>
</dbReference>
<dbReference type="Gene3D" id="1.10.10.60">
    <property type="entry name" value="Homeodomain-like"/>
    <property type="match status" value="1"/>
</dbReference>
<dbReference type="InterPro" id="IPR001356">
    <property type="entry name" value="HD"/>
</dbReference>
<dbReference type="InterPro" id="IPR017970">
    <property type="entry name" value="Homeobox_CS"/>
</dbReference>
<dbReference type="InterPro" id="IPR009057">
    <property type="entry name" value="Homeodomain-like_sf"/>
</dbReference>
<dbReference type="InterPro" id="IPR003893">
    <property type="entry name" value="Iroquois_homeo"/>
</dbReference>
<dbReference type="InterPro" id="IPR008422">
    <property type="entry name" value="KN_HD"/>
</dbReference>
<dbReference type="PANTHER" id="PTHR11211">
    <property type="entry name" value="IROQUOIS-CLASS HOMEODOMAIN PROTEIN IRX"/>
    <property type="match status" value="1"/>
</dbReference>
<dbReference type="PANTHER" id="PTHR11211:SF17">
    <property type="entry name" value="IROQUOIS-CLASS HOMEODOMAIN PROTEIN IRX-5"/>
    <property type="match status" value="1"/>
</dbReference>
<dbReference type="Pfam" id="PF05920">
    <property type="entry name" value="Homeobox_KN"/>
    <property type="match status" value="1"/>
</dbReference>
<dbReference type="SMART" id="SM00389">
    <property type="entry name" value="HOX"/>
    <property type="match status" value="1"/>
</dbReference>
<dbReference type="SMART" id="SM00548">
    <property type="entry name" value="IRO"/>
    <property type="match status" value="1"/>
</dbReference>
<dbReference type="SUPFAM" id="SSF46689">
    <property type="entry name" value="Homeodomain-like"/>
    <property type="match status" value="1"/>
</dbReference>
<dbReference type="PROSITE" id="PS00027">
    <property type="entry name" value="HOMEOBOX_1"/>
    <property type="match status" value="1"/>
</dbReference>
<dbReference type="PROSITE" id="PS50071">
    <property type="entry name" value="HOMEOBOX_2"/>
    <property type="match status" value="1"/>
</dbReference>
<proteinExistence type="evidence at protein level"/>
<comment type="function">
    <text evidence="1 4">Establishes the cardiac repolarization gradient by its repressive actions on the KCND2 potassium-channel gene. Required for retinal cone bipolar cell differentiation. May regulate contrast adaptation in the retina and control specific aspects of visual function in circuits of the mammalian retina (By similarity). Could be involved in the regulation of both the cell cycle and apoptosis in prostate cancer cells. Involved in craniofacial and gonadal development. Modulates the migration of progenitor cell populations in branchial arches and gonads by repressing CXCL12.</text>
</comment>
<comment type="subcellular location">
    <subcellularLocation>
        <location evidence="7">Nucleus</location>
    </subcellularLocation>
</comment>
<comment type="alternative products">
    <event type="alternative splicing"/>
    <isoform>
        <id>P78411-1</id>
        <name>1</name>
        <sequence type="displayed"/>
    </isoform>
    <isoform>
        <id>P78411-2</id>
        <name>2</name>
        <sequence type="described" ref="VSP_047364"/>
    </isoform>
    <isoform>
        <id>P78411-3</id>
        <name>3</name>
        <sequence type="described" ref="VSP_047363"/>
    </isoform>
</comment>
<comment type="induction">
    <text>Down-regulated by 1,25-dihydroxyvitamin D3 in prostate cancer samples from patients assigned to receive weekly high-dose 1,25-dihydroxyvitamin D3 before radical prostatectomy. Also down-regulated by 1,25-dihydroxyvitamin D3 in the human androgen-sensitive prostate cancer cell line LNCaP and in the estrogen-sensitive breast cancer cell line MCF-7.</text>
</comment>
<comment type="disease" evidence="4">
    <disease id="DI-03480">
        <name>Hamamy syndrome</name>
        <acronym>HMMS</acronym>
        <description>A syndrome characterized by severe hypertelorism, upslanting palpebral fissures, brachycephaly, abnormal ears, sloping shoulders, enamel hypoplasia, and osteopenia with repeated fractures. Additional features include myopia, mild to moderate sensorineural hearing loss, gonadal anomalies and borderline intelligence.</description>
        <dbReference type="MIM" id="611174"/>
    </disease>
    <text>The disease is caused by variants affecting the gene represented in this entry.</text>
</comment>
<comment type="similarity">
    <text evidence="7">Belongs to the TALE/IRO homeobox family.</text>
</comment>
<organism>
    <name type="scientific">Homo sapiens</name>
    <name type="common">Human</name>
    <dbReference type="NCBI Taxonomy" id="9606"/>
    <lineage>
        <taxon>Eukaryota</taxon>
        <taxon>Metazoa</taxon>
        <taxon>Chordata</taxon>
        <taxon>Craniata</taxon>
        <taxon>Vertebrata</taxon>
        <taxon>Euteleostomi</taxon>
        <taxon>Mammalia</taxon>
        <taxon>Eutheria</taxon>
        <taxon>Euarchontoglires</taxon>
        <taxon>Primates</taxon>
        <taxon>Haplorrhini</taxon>
        <taxon>Catarrhini</taxon>
        <taxon>Hominidae</taxon>
        <taxon>Homo</taxon>
    </lineage>
</organism>
<evidence type="ECO:0000250" key="1"/>
<evidence type="ECO:0000255" key="2">
    <source>
        <dbReference type="PROSITE-ProRule" id="PRU00108"/>
    </source>
</evidence>
<evidence type="ECO:0000256" key="3">
    <source>
        <dbReference type="SAM" id="MobiDB-lite"/>
    </source>
</evidence>
<evidence type="ECO:0000269" key="4">
    <source>
    </source>
</evidence>
<evidence type="ECO:0000303" key="5">
    <source>
    </source>
</evidence>
<evidence type="ECO:0000303" key="6">
    <source ref="1"/>
</evidence>
<evidence type="ECO:0000305" key="7"/>
<evidence type="ECO:0007744" key="8">
    <source>
    </source>
</evidence>
<accession>P78411</accession>
<accession>H0YMS7</accession>
<accession>P78416</accession>
<accession>Q7Z2E1</accession>
<sequence length="483" mass="50361">MSYPQGYLYQPSASLALYSCPAYSTSVISGPRTDELGRSSSGSAFSPYAGSTAFTAPSPGYNSHLQYGADPAAAAAAAFSSYVGSPYDHTPGMAGSLGYHPYAAPLGSYPYGDPAYRKNATRDATATLKAWLNEHRKNPYPTKGEKIMLAIITKMTLTQVSTWFANARRRLKKENKMTWTPRNRSEDEEEEENIDLEKNDEDEPQKPEDKGDPEGPEAGGAEQKAASGCERLQGPPTPAGKETEGSLSDSDFKEPPSEGRLDALQGPPRTGGPSPAGPAAARLAEDPAPHYPAGAPAPGPHPAAGEVPPGPGGPSVIHSPPPPPPPAVLAKPKLWSLAEIATSSDKVKDGGGGNEGSPCPPCPGPIAGQALGGSRASPAPAPSRSPSAQCPFPGGTVLSRPLYYTAPFYPGYTNYGSFGHLHGHPGPGPGPTTGPGSHFNGLNQTVLNRADALAKDPKMLRSQSQLDLCKDSPYELKKGMSDI</sequence>
<feature type="chain" id="PRO_0000049160" description="Iroquois-class homeodomain protein IRX-5">
    <location>
        <begin position="1"/>
        <end position="483"/>
    </location>
</feature>
<feature type="DNA-binding region" description="Homeobox; TALE-type" evidence="2">
    <location>
        <begin position="113"/>
        <end position="175"/>
    </location>
</feature>
<feature type="region of interest" description="Disordered" evidence="3">
    <location>
        <begin position="177"/>
        <end position="392"/>
    </location>
</feature>
<feature type="region of interest" description="Disordered" evidence="3">
    <location>
        <begin position="423"/>
        <end position="442"/>
    </location>
</feature>
<feature type="compositionally biased region" description="Acidic residues" evidence="3">
    <location>
        <begin position="186"/>
        <end position="203"/>
    </location>
</feature>
<feature type="compositionally biased region" description="Basic and acidic residues" evidence="3">
    <location>
        <begin position="204"/>
        <end position="213"/>
    </location>
</feature>
<feature type="compositionally biased region" description="Basic and acidic residues" evidence="3">
    <location>
        <begin position="250"/>
        <end position="261"/>
    </location>
</feature>
<feature type="compositionally biased region" description="Low complexity" evidence="3">
    <location>
        <begin position="266"/>
        <end position="282"/>
    </location>
</feature>
<feature type="compositionally biased region" description="Low complexity" evidence="3">
    <location>
        <begin position="374"/>
        <end position="388"/>
    </location>
</feature>
<feature type="modified residue" description="Phosphoserine" evidence="8">
    <location>
        <position position="274"/>
    </location>
</feature>
<feature type="modified residue" description="Phosphoserine" evidence="8">
    <location>
        <position position="464"/>
    </location>
</feature>
<feature type="splice variant" id="VSP_047363" description="In isoform 3." evidence="5">
    <original>MSYPQGYLYQPSASLALYSCPAYSTSVISGPRTDELGRSSSGSAFSPYAGSTAFTAPSPGYNSHLQYGADPAAAAAAAFSSYV</original>
    <variation>MAVETTVHTHLSASPPQ</variation>
    <location>
        <begin position="1"/>
        <end position="83"/>
    </location>
</feature>
<feature type="splice variant" id="VSP_047364" description="In isoform 2." evidence="6">
    <location>
        <position position="219"/>
    </location>
</feature>
<feature type="sequence variant" id="VAR_068483" description="In HMMS; hypomorphic mutation; dbSNP:rs387907198." evidence="4">
    <original>A</original>
    <variation>P</variation>
    <location>
        <position position="150"/>
    </location>
</feature>
<feature type="sequence variant" id="VAR_068484" description="In HMMS; hypomorphic mutation; dbSNP:rs786200931." evidence="4">
    <original>N</original>
    <variation>K</variation>
    <location>
        <position position="166"/>
    </location>
</feature>
<feature type="sequence conflict" description="In Ref. 2; AAB50007." evidence="7" ref="2">
    <original>G</original>
    <variation>A</variation>
    <location>
        <position position="211"/>
    </location>
</feature>
<feature type="sequence conflict" description="In Ref. 2; AAB50002." evidence="7" ref="2">
    <original>S</original>
    <variation>L</variation>
    <location>
        <position position="343"/>
    </location>
</feature>
<gene>
    <name type="primary">IRX5</name>
    <name type="synonym">IRX2A</name>
    <name type="synonym">IRXB2</name>
</gene>
<name>IRX5_HUMAN</name>